<sequence>MKFSSGKSIIFATIASLALSAPVTYDTNSTAELQSPSSQEILGWSHATFPTIYQTCNETNARMLNAAFKDTAEITAYGKDRLLNYGVDDVYYKRWFGNGSIFTVMGVFEQLMEASKGAMLMRCDDIDGLCAANPNYYAGHHRQSAPAETVICDYFYTSKKPLSTICFEGTIVDVGPKHYAGIDMLHRYLHVPTMSMDGYVGEYAETLEEVVDYTQNNATYAVRNTDNYLYYLADVYSASVIPGGCLGNL</sequence>
<dbReference type="EMBL" id="X89715">
    <property type="protein sequence ID" value="CAA61861.1"/>
    <property type="molecule type" value="Genomic_DNA"/>
</dbReference>
<dbReference type="EMBL" id="Z74896">
    <property type="protein sequence ID" value="CAA99176.1"/>
    <property type="molecule type" value="Genomic_DNA"/>
</dbReference>
<dbReference type="EMBL" id="AY693221">
    <property type="protein sequence ID" value="AAT93240.1"/>
    <property type="molecule type" value="Genomic_DNA"/>
</dbReference>
<dbReference type="EMBL" id="BK006948">
    <property type="protein sequence ID" value="DAA10633.1"/>
    <property type="molecule type" value="Genomic_DNA"/>
</dbReference>
<dbReference type="PIR" id="S66851">
    <property type="entry name" value="S66851"/>
</dbReference>
<dbReference type="RefSeq" id="NP_014488.1">
    <property type="nucleotide sequence ID" value="NM_001183407.1"/>
</dbReference>
<dbReference type="BioGRID" id="34264">
    <property type="interactions" value="13"/>
</dbReference>
<dbReference type="DIP" id="DIP-4201N"/>
<dbReference type="FunCoup" id="Q12512">
    <property type="interactions" value="64"/>
</dbReference>
<dbReference type="MINT" id="Q12512"/>
<dbReference type="STRING" id="4932.YOL154W"/>
<dbReference type="GlyCosmos" id="Q12512">
    <property type="glycosylation" value="4 sites, No reported glycans"/>
</dbReference>
<dbReference type="GlyGen" id="Q12512">
    <property type="glycosylation" value="4 sites"/>
</dbReference>
<dbReference type="PaxDb" id="4932-YOL154W"/>
<dbReference type="PeptideAtlas" id="Q12512"/>
<dbReference type="EnsemblFungi" id="YOL154W_mRNA">
    <property type="protein sequence ID" value="YOL154W"/>
    <property type="gene ID" value="YOL154W"/>
</dbReference>
<dbReference type="GeneID" id="854011"/>
<dbReference type="KEGG" id="sce:YOL154W"/>
<dbReference type="AGR" id="SGD:S000005514"/>
<dbReference type="SGD" id="S000005514">
    <property type="gene designation" value="ZPS1"/>
</dbReference>
<dbReference type="VEuPathDB" id="FungiDB:YOL154W"/>
<dbReference type="eggNOG" id="ENOG502RTN8">
    <property type="taxonomic scope" value="Eukaryota"/>
</dbReference>
<dbReference type="HOGENOM" id="CLU_048223_1_0_1"/>
<dbReference type="InParanoid" id="Q12512"/>
<dbReference type="OMA" id="CNATQRR"/>
<dbReference type="OrthoDB" id="4689212at2759"/>
<dbReference type="BioCyc" id="YEAST:G3O-33542-MONOMER"/>
<dbReference type="BioGRID-ORCS" id="854011">
    <property type="hits" value="0 hits in 10 CRISPR screens"/>
</dbReference>
<dbReference type="PRO" id="PR:Q12512"/>
<dbReference type="Proteomes" id="UP000002311">
    <property type="component" value="Chromosome XV"/>
</dbReference>
<dbReference type="RNAct" id="Q12512">
    <property type="molecule type" value="protein"/>
</dbReference>
<dbReference type="GO" id="GO:0071944">
    <property type="term" value="C:cell periphery"/>
    <property type="evidence" value="ECO:0007005"/>
    <property type="project" value="SGD"/>
</dbReference>
<dbReference type="GO" id="GO:0009986">
    <property type="term" value="C:cell surface"/>
    <property type="evidence" value="ECO:0000318"/>
    <property type="project" value="GO_Central"/>
</dbReference>
<dbReference type="GO" id="GO:0005576">
    <property type="term" value="C:extracellular region"/>
    <property type="evidence" value="ECO:0000318"/>
    <property type="project" value="GO_Central"/>
</dbReference>
<dbReference type="GO" id="GO:0009277">
    <property type="term" value="C:fungal-type cell wall"/>
    <property type="evidence" value="ECO:0000314"/>
    <property type="project" value="SGD"/>
</dbReference>
<dbReference type="GO" id="GO:0000324">
    <property type="term" value="C:fungal-type vacuole"/>
    <property type="evidence" value="ECO:0007005"/>
    <property type="project" value="SGD"/>
</dbReference>
<dbReference type="GO" id="GO:0005178">
    <property type="term" value="F:integrin binding"/>
    <property type="evidence" value="ECO:0000318"/>
    <property type="project" value="GO_Central"/>
</dbReference>
<dbReference type="GO" id="GO:0008237">
    <property type="term" value="F:metallopeptidase activity"/>
    <property type="evidence" value="ECO:0007669"/>
    <property type="project" value="InterPro"/>
</dbReference>
<dbReference type="GO" id="GO:0008270">
    <property type="term" value="F:zinc ion binding"/>
    <property type="evidence" value="ECO:0000318"/>
    <property type="project" value="GO_Central"/>
</dbReference>
<dbReference type="CDD" id="cd11307">
    <property type="entry name" value="M35_Asp_f2_like"/>
    <property type="match status" value="1"/>
</dbReference>
<dbReference type="FunFam" id="3.40.390.10:FF:000043">
    <property type="entry name" value="Major allergen Asp F2"/>
    <property type="match status" value="1"/>
</dbReference>
<dbReference type="Gene3D" id="3.40.390.10">
    <property type="entry name" value="Collagenase (Catalytic Domain)"/>
    <property type="match status" value="1"/>
</dbReference>
<dbReference type="InterPro" id="IPR029482">
    <property type="entry name" value="HRXXH"/>
</dbReference>
<dbReference type="InterPro" id="IPR024079">
    <property type="entry name" value="MetalloPept_cat_dom_sf"/>
</dbReference>
<dbReference type="InterPro" id="IPR039124">
    <property type="entry name" value="PRA1-like"/>
</dbReference>
<dbReference type="PANTHER" id="PTHR39399">
    <property type="entry name" value="PROTEIN ZPS1"/>
    <property type="match status" value="1"/>
</dbReference>
<dbReference type="PANTHER" id="PTHR39399:SF1">
    <property type="entry name" value="PROTEIN ZPS1"/>
    <property type="match status" value="1"/>
</dbReference>
<dbReference type="Pfam" id="PF13933">
    <property type="entry name" value="HRXXH"/>
    <property type="match status" value="1"/>
</dbReference>
<dbReference type="SUPFAM" id="SSF55486">
    <property type="entry name" value="Metalloproteases ('zincins'), catalytic domain"/>
    <property type="match status" value="1"/>
</dbReference>
<evidence type="ECO:0000255" key="1"/>
<evidence type="ECO:0000305" key="2"/>
<keyword id="KW-0325">Glycoprotein</keyword>
<keyword id="KW-1185">Reference proteome</keyword>
<keyword id="KW-0732">Signal</keyword>
<organism>
    <name type="scientific">Saccharomyces cerevisiae (strain ATCC 204508 / S288c)</name>
    <name type="common">Baker's yeast</name>
    <dbReference type="NCBI Taxonomy" id="559292"/>
    <lineage>
        <taxon>Eukaryota</taxon>
        <taxon>Fungi</taxon>
        <taxon>Dikarya</taxon>
        <taxon>Ascomycota</taxon>
        <taxon>Saccharomycotina</taxon>
        <taxon>Saccharomycetes</taxon>
        <taxon>Saccharomycetales</taxon>
        <taxon>Saccharomycetaceae</taxon>
        <taxon>Saccharomyces</taxon>
    </lineage>
</organism>
<name>ZPS1_YEAST</name>
<feature type="signal peptide" evidence="1">
    <location>
        <begin position="1"/>
        <end position="20"/>
    </location>
</feature>
<feature type="chain" id="PRO_0000041751" description="Protein ZPS1">
    <location>
        <begin position="21"/>
        <end position="249"/>
    </location>
</feature>
<feature type="glycosylation site" description="N-linked (GlcNAc...) asparagine" evidence="1">
    <location>
        <position position="28"/>
    </location>
</feature>
<feature type="glycosylation site" description="N-linked (GlcNAc...) asparagine" evidence="1">
    <location>
        <position position="57"/>
    </location>
</feature>
<feature type="glycosylation site" description="N-linked (GlcNAc...) asparagine" evidence="1">
    <location>
        <position position="98"/>
    </location>
</feature>
<feature type="glycosylation site" description="N-linked (GlcNAc...) asparagine" evidence="1">
    <location>
        <position position="217"/>
    </location>
</feature>
<reference key="1">
    <citation type="journal article" date="1996" name="Yeast">
        <title>Analysis of the DNA sequence of a 15,500 bp fragment near the left telomere of chromosome XV from Saccharomyces cerevisiae reveals a putative sugar transporter, a carboxypeptidase homologue and two new open reading frames.</title>
        <authorList>
            <person name="Gamo F.-J."/>
            <person name="Lafuente M.J."/>
            <person name="Casamayor A."/>
            <person name="Arino J."/>
            <person name="Aldea M."/>
            <person name="Casas C."/>
            <person name="Herrero E."/>
            <person name="Gancedo C."/>
        </authorList>
    </citation>
    <scope>NUCLEOTIDE SEQUENCE [GENOMIC DNA]</scope>
    <source>
        <strain>ATCC 96604 / S288c / FY1679</strain>
    </source>
</reference>
<reference key="2">
    <citation type="journal article" date="1997" name="Nature">
        <title>The nucleotide sequence of Saccharomyces cerevisiae chromosome XV.</title>
        <authorList>
            <person name="Dujon B."/>
            <person name="Albermann K."/>
            <person name="Aldea M."/>
            <person name="Alexandraki D."/>
            <person name="Ansorge W."/>
            <person name="Arino J."/>
            <person name="Benes V."/>
            <person name="Bohn C."/>
            <person name="Bolotin-Fukuhara M."/>
            <person name="Bordonne R."/>
            <person name="Boyer J."/>
            <person name="Camasses A."/>
            <person name="Casamayor A."/>
            <person name="Casas C."/>
            <person name="Cheret G."/>
            <person name="Cziepluch C."/>
            <person name="Daignan-Fornier B."/>
            <person name="Dang V.-D."/>
            <person name="de Haan M."/>
            <person name="Delius H."/>
            <person name="Durand P."/>
            <person name="Fairhead C."/>
            <person name="Feldmann H."/>
            <person name="Gaillon L."/>
            <person name="Galisson F."/>
            <person name="Gamo F.-J."/>
            <person name="Gancedo C."/>
            <person name="Goffeau A."/>
            <person name="Goulding S.E."/>
            <person name="Grivell L.A."/>
            <person name="Habbig B."/>
            <person name="Hand N.J."/>
            <person name="Hani J."/>
            <person name="Hattenhorst U."/>
            <person name="Hebling U."/>
            <person name="Hernando Y."/>
            <person name="Herrero E."/>
            <person name="Heumann K."/>
            <person name="Hiesel R."/>
            <person name="Hilger F."/>
            <person name="Hofmann B."/>
            <person name="Hollenberg C.P."/>
            <person name="Hughes B."/>
            <person name="Jauniaux J.-C."/>
            <person name="Kalogeropoulos A."/>
            <person name="Katsoulou C."/>
            <person name="Kordes E."/>
            <person name="Lafuente M.J."/>
            <person name="Landt O."/>
            <person name="Louis E.J."/>
            <person name="Maarse A.C."/>
            <person name="Madania A."/>
            <person name="Mannhaupt G."/>
            <person name="Marck C."/>
            <person name="Martin R.P."/>
            <person name="Mewes H.-W."/>
            <person name="Michaux G."/>
            <person name="Paces V."/>
            <person name="Parle-McDermott A.G."/>
            <person name="Pearson B.M."/>
            <person name="Perrin A."/>
            <person name="Pettersson B."/>
            <person name="Poch O."/>
            <person name="Pohl T.M."/>
            <person name="Poirey R."/>
            <person name="Portetelle D."/>
            <person name="Pujol A."/>
            <person name="Purnelle B."/>
            <person name="Ramezani Rad M."/>
            <person name="Rechmann S."/>
            <person name="Schwager C."/>
            <person name="Schweizer M."/>
            <person name="Sor F."/>
            <person name="Sterky F."/>
            <person name="Tarassov I.A."/>
            <person name="Teodoru C."/>
            <person name="Tettelin H."/>
            <person name="Thierry A."/>
            <person name="Tobiasch E."/>
            <person name="Tzermia M."/>
            <person name="Uhlen M."/>
            <person name="Unseld M."/>
            <person name="Valens M."/>
            <person name="Vandenbol M."/>
            <person name="Vetter I."/>
            <person name="Vlcek C."/>
            <person name="Voet M."/>
            <person name="Volckaert G."/>
            <person name="Voss H."/>
            <person name="Wambutt R."/>
            <person name="Wedler H."/>
            <person name="Wiemann S."/>
            <person name="Winsor B."/>
            <person name="Wolfe K.H."/>
            <person name="Zollner A."/>
            <person name="Zumstein E."/>
            <person name="Kleine K."/>
        </authorList>
    </citation>
    <scope>NUCLEOTIDE SEQUENCE [LARGE SCALE GENOMIC DNA]</scope>
    <source>
        <strain>ATCC 204508 / S288c</strain>
    </source>
</reference>
<reference key="3">
    <citation type="journal article" date="2014" name="G3 (Bethesda)">
        <title>The reference genome sequence of Saccharomyces cerevisiae: Then and now.</title>
        <authorList>
            <person name="Engel S.R."/>
            <person name="Dietrich F.S."/>
            <person name="Fisk D.G."/>
            <person name="Binkley G."/>
            <person name="Balakrishnan R."/>
            <person name="Costanzo M.C."/>
            <person name="Dwight S.S."/>
            <person name="Hitz B.C."/>
            <person name="Karra K."/>
            <person name="Nash R.S."/>
            <person name="Weng S."/>
            <person name="Wong E.D."/>
            <person name="Lloyd P."/>
            <person name="Skrzypek M.S."/>
            <person name="Miyasato S.R."/>
            <person name="Simison M."/>
            <person name="Cherry J.M."/>
        </authorList>
    </citation>
    <scope>GENOME REANNOTATION</scope>
    <source>
        <strain>ATCC 204508 / S288c</strain>
    </source>
</reference>
<reference key="4">
    <citation type="journal article" date="2007" name="Genome Res.">
        <title>Approaching a complete repository of sequence-verified protein-encoding clones for Saccharomyces cerevisiae.</title>
        <authorList>
            <person name="Hu Y."/>
            <person name="Rolfs A."/>
            <person name="Bhullar B."/>
            <person name="Murthy T.V.S."/>
            <person name="Zhu C."/>
            <person name="Berger M.F."/>
            <person name="Camargo A.A."/>
            <person name="Kelley F."/>
            <person name="McCarron S."/>
            <person name="Jepson D."/>
            <person name="Richardson A."/>
            <person name="Raphael J."/>
            <person name="Moreira D."/>
            <person name="Taycher E."/>
            <person name="Zuo D."/>
            <person name="Mohr S."/>
            <person name="Kane M.F."/>
            <person name="Williamson J."/>
            <person name="Simpson A.J.G."/>
            <person name="Bulyk M.L."/>
            <person name="Harlow E."/>
            <person name="Marsischky G."/>
            <person name="Kolodner R.D."/>
            <person name="LaBaer J."/>
        </authorList>
    </citation>
    <scope>NUCLEOTIDE SEQUENCE [GENOMIC DNA]</scope>
    <source>
        <strain>ATCC 204508 / S288c</strain>
    </source>
</reference>
<protein>
    <recommendedName>
        <fullName>Protein ZPS1</fullName>
    </recommendedName>
</protein>
<proteinExistence type="inferred from homology"/>
<comment type="similarity">
    <text evidence="2">Belongs to the ZPS1 family.</text>
</comment>
<accession>Q12512</accession>
<accession>D6W1R7</accession>
<gene>
    <name type="primary">ZPS1</name>
    <name type="ordered locus">YOL154W</name>
    <name type="ORF">AOB249</name>
</gene>